<protein>
    <recommendedName>
        <fullName>Putative NrdI-like protein</fullName>
    </recommendedName>
</protein>
<keyword id="KW-1185">Reference proteome</keyword>
<sequence>MPQITLVFISLSGNTLSFVKRLSLYLADNYDYHVKQINIKDLKHETFPVKEEFVAILPTYLEGGNGVDSGDVEILTTPLGEFIAAHGNAQRCLGIIGSGNKNFNHQYCLTAKQYAKRFGFPLLGDFELRGTPDDISRLAQVIMEASSRHSSNDTQTLPNS</sequence>
<name>NRDIL_STRP1</name>
<gene>
    <name type="ordered locus">SPy_1984</name>
    <name type="ordered locus">M5005_Spy1690</name>
</gene>
<dbReference type="EMBL" id="AE004092">
    <property type="protein sequence ID" value="AAK34669.1"/>
    <property type="molecule type" value="Genomic_DNA"/>
</dbReference>
<dbReference type="EMBL" id="CP000017">
    <property type="protein sequence ID" value="AAZ52308.1"/>
    <property type="molecule type" value="Genomic_DNA"/>
</dbReference>
<dbReference type="RefSeq" id="NP_269948.1">
    <property type="nucleotide sequence ID" value="NC_002737.2"/>
</dbReference>
<dbReference type="SMR" id="Q99XX2"/>
<dbReference type="PaxDb" id="1314-HKU360_01804"/>
<dbReference type="KEGG" id="spy:SPy_1984"/>
<dbReference type="KEGG" id="spz:M5005_Spy1690"/>
<dbReference type="PATRIC" id="fig|160490.10.peg.1724"/>
<dbReference type="HOGENOM" id="CLU_114845_1_0_9"/>
<dbReference type="OMA" id="GPWVLLT"/>
<dbReference type="Proteomes" id="UP000000750">
    <property type="component" value="Chromosome"/>
</dbReference>
<dbReference type="GO" id="GO:0010181">
    <property type="term" value="F:FMN binding"/>
    <property type="evidence" value="ECO:0007669"/>
    <property type="project" value="InterPro"/>
</dbReference>
<dbReference type="GO" id="GO:0036211">
    <property type="term" value="P:protein modification process"/>
    <property type="evidence" value="ECO:0007669"/>
    <property type="project" value="InterPro"/>
</dbReference>
<dbReference type="Gene3D" id="3.40.50.360">
    <property type="match status" value="1"/>
</dbReference>
<dbReference type="InterPro" id="IPR029039">
    <property type="entry name" value="Flavoprotein-like_sf"/>
</dbReference>
<dbReference type="InterPro" id="IPR004465">
    <property type="entry name" value="RNR_NrdI"/>
</dbReference>
<dbReference type="NCBIfam" id="NF002714">
    <property type="entry name" value="PRK02551.1"/>
    <property type="match status" value="1"/>
</dbReference>
<dbReference type="PANTHER" id="PTHR37297">
    <property type="entry name" value="PROTEIN NRDI"/>
    <property type="match status" value="1"/>
</dbReference>
<dbReference type="PANTHER" id="PTHR37297:SF1">
    <property type="entry name" value="PROTEIN NRDI"/>
    <property type="match status" value="1"/>
</dbReference>
<dbReference type="Pfam" id="PF07972">
    <property type="entry name" value="Flavodoxin_NdrI"/>
    <property type="match status" value="1"/>
</dbReference>
<dbReference type="PIRSF" id="PIRSF005087">
    <property type="entry name" value="NrdI"/>
    <property type="match status" value="1"/>
</dbReference>
<dbReference type="SUPFAM" id="SSF52218">
    <property type="entry name" value="Flavoproteins"/>
    <property type="match status" value="1"/>
</dbReference>
<accession>Q99XX2</accession>
<accession>Q48WG7</accession>
<feature type="chain" id="PRO_0000164352" description="Putative NrdI-like protein">
    <location>
        <begin position="1"/>
        <end position="160"/>
    </location>
</feature>
<proteinExistence type="inferred from homology"/>
<comment type="similarity">
    <text evidence="1">Belongs to the NrdI family.</text>
</comment>
<reference key="1">
    <citation type="journal article" date="2001" name="Proc. Natl. Acad. Sci. U.S.A.">
        <title>Complete genome sequence of an M1 strain of Streptococcus pyogenes.</title>
        <authorList>
            <person name="Ferretti J.J."/>
            <person name="McShan W.M."/>
            <person name="Ajdic D.J."/>
            <person name="Savic D.J."/>
            <person name="Savic G."/>
            <person name="Lyon K."/>
            <person name="Primeaux C."/>
            <person name="Sezate S."/>
            <person name="Suvorov A.N."/>
            <person name="Kenton S."/>
            <person name="Lai H.S."/>
            <person name="Lin S.P."/>
            <person name="Qian Y."/>
            <person name="Jia H.G."/>
            <person name="Najar F.Z."/>
            <person name="Ren Q."/>
            <person name="Zhu H."/>
            <person name="Song L."/>
            <person name="White J."/>
            <person name="Yuan X."/>
            <person name="Clifton S.W."/>
            <person name="Roe B.A."/>
            <person name="McLaughlin R.E."/>
        </authorList>
    </citation>
    <scope>NUCLEOTIDE SEQUENCE [LARGE SCALE GENOMIC DNA]</scope>
    <source>
        <strain>ATCC 700294 / SF370 / Serotype M1</strain>
    </source>
</reference>
<reference key="2">
    <citation type="journal article" date="2005" name="J. Infect. Dis.">
        <title>Evolutionary origin and emergence of a highly successful clone of serotype M1 group A Streptococcus involved multiple horizontal gene transfer events.</title>
        <authorList>
            <person name="Sumby P."/>
            <person name="Porcella S.F."/>
            <person name="Madrigal A.G."/>
            <person name="Barbian K.D."/>
            <person name="Virtaneva K."/>
            <person name="Ricklefs S.M."/>
            <person name="Sturdevant D.E."/>
            <person name="Graham M.R."/>
            <person name="Vuopio-Varkila J."/>
            <person name="Hoe N.P."/>
            <person name="Musser J.M."/>
        </authorList>
    </citation>
    <scope>NUCLEOTIDE SEQUENCE [LARGE SCALE GENOMIC DNA]</scope>
    <source>
        <strain>ATCC BAA-947 / MGAS5005 / Serotype M1</strain>
    </source>
</reference>
<organism>
    <name type="scientific">Streptococcus pyogenes serotype M1</name>
    <dbReference type="NCBI Taxonomy" id="301447"/>
    <lineage>
        <taxon>Bacteria</taxon>
        <taxon>Bacillati</taxon>
        <taxon>Bacillota</taxon>
        <taxon>Bacilli</taxon>
        <taxon>Lactobacillales</taxon>
        <taxon>Streptococcaceae</taxon>
        <taxon>Streptococcus</taxon>
    </lineage>
</organism>
<evidence type="ECO:0000305" key="1"/>